<dbReference type="EMBL" id="X65258">
    <property type="protein sequence ID" value="CAA46354.1"/>
    <property type="molecule type" value="Genomic_DNA"/>
</dbReference>
<dbReference type="PIR" id="C94409">
    <property type="entry name" value="NKVLA3"/>
</dbReference>
<dbReference type="PIR" id="S20750">
    <property type="entry name" value="S20750"/>
</dbReference>
<dbReference type="PIR" id="S33686">
    <property type="entry name" value="S33686"/>
</dbReference>
<dbReference type="SMR" id="Q67876"/>
<dbReference type="Proteomes" id="UP000008282">
    <property type="component" value="Genome"/>
</dbReference>
<dbReference type="GO" id="GO:0005576">
    <property type="term" value="C:extracellular region"/>
    <property type="evidence" value="ECO:0007669"/>
    <property type="project" value="UniProtKB-SubCell"/>
</dbReference>
<dbReference type="GO" id="GO:0043657">
    <property type="term" value="C:host cell"/>
    <property type="evidence" value="ECO:0007669"/>
    <property type="project" value="GOC"/>
</dbReference>
<dbReference type="GO" id="GO:0030430">
    <property type="term" value="C:host cell cytoplasm"/>
    <property type="evidence" value="ECO:0007669"/>
    <property type="project" value="UniProtKB-UniRule"/>
</dbReference>
<dbReference type="GO" id="GO:0042025">
    <property type="term" value="C:host cell nucleus"/>
    <property type="evidence" value="ECO:0007669"/>
    <property type="project" value="UniProtKB-SubCell"/>
</dbReference>
<dbReference type="GO" id="GO:0039619">
    <property type="term" value="C:T=4 icosahedral viral capsid"/>
    <property type="evidence" value="ECO:0007669"/>
    <property type="project" value="UniProtKB-UniRule"/>
</dbReference>
<dbReference type="GO" id="GO:0003677">
    <property type="term" value="F:DNA binding"/>
    <property type="evidence" value="ECO:0007669"/>
    <property type="project" value="UniProtKB-UniRule"/>
</dbReference>
<dbReference type="GO" id="GO:0003723">
    <property type="term" value="F:RNA binding"/>
    <property type="evidence" value="ECO:0007669"/>
    <property type="project" value="UniProtKB-UniRule"/>
</dbReference>
<dbReference type="GO" id="GO:0005198">
    <property type="term" value="F:structural molecule activity"/>
    <property type="evidence" value="ECO:0007669"/>
    <property type="project" value="UniProtKB-UniRule"/>
</dbReference>
<dbReference type="GO" id="GO:0075521">
    <property type="term" value="P:microtubule-dependent intracellular transport of viral material towards nucleus"/>
    <property type="evidence" value="ECO:0007669"/>
    <property type="project" value="UniProtKB-UniRule"/>
</dbReference>
<dbReference type="GO" id="GO:0046718">
    <property type="term" value="P:symbiont entry into host cell"/>
    <property type="evidence" value="ECO:0007669"/>
    <property type="project" value="UniProtKB-UniRule"/>
</dbReference>
<dbReference type="GO" id="GO:0075732">
    <property type="term" value="P:viral penetration into host nucleus"/>
    <property type="evidence" value="ECO:0007669"/>
    <property type="project" value="UniProtKB-UniRule"/>
</dbReference>
<dbReference type="FunFam" id="1.10.4090.10:FF:000001">
    <property type="entry name" value="Capsid protein"/>
    <property type="match status" value="1"/>
</dbReference>
<dbReference type="Gene3D" id="1.10.4090.10">
    <property type="entry name" value="Viral capsid, core domain supefamily, Hepatitis B virus"/>
    <property type="match status" value="1"/>
</dbReference>
<dbReference type="HAMAP" id="MF_04076">
    <property type="entry name" value="HBV_HBEAG"/>
    <property type="match status" value="1"/>
</dbReference>
<dbReference type="InterPro" id="IPR013195">
    <property type="entry name" value="Hepatitis_B_virus_capsid_N"/>
</dbReference>
<dbReference type="InterPro" id="IPR002006">
    <property type="entry name" value="Hepatitis_core"/>
</dbReference>
<dbReference type="InterPro" id="IPR036459">
    <property type="entry name" value="Viral_capsid_core_dom_sf_HBV"/>
</dbReference>
<dbReference type="Pfam" id="PF08290">
    <property type="entry name" value="Hep_core_N"/>
    <property type="match status" value="1"/>
</dbReference>
<dbReference type="Pfam" id="PF00906">
    <property type="entry name" value="Hepatitis_core"/>
    <property type="match status" value="3"/>
</dbReference>
<dbReference type="SUPFAM" id="SSF47852">
    <property type="entry name" value="Hepatitis B viral capsid (hbcag)"/>
    <property type="match status" value="1"/>
</dbReference>
<keyword id="KW-0024">Alternative initiation</keyword>
<keyword id="KW-1015">Disulfide bond</keyword>
<keyword id="KW-1048">Host nucleus</keyword>
<keyword id="KW-0945">Host-virus interaction</keyword>
<keyword id="KW-0677">Repeat</keyword>
<keyword id="KW-0964">Secreted</keyword>
<keyword id="KW-0732">Signal</keyword>
<keyword id="KW-0899">Viral immunoevasion</keyword>
<protein>
    <recommendedName>
        <fullName evidence="2">External core antigen</fullName>
    </recommendedName>
    <alternativeName>
        <fullName evidence="2">HBeAg</fullName>
    </alternativeName>
    <alternativeName>
        <fullName evidence="2">Precore protein</fullName>
    </alternativeName>
    <alternativeName>
        <fullName evidence="2">p25</fullName>
    </alternativeName>
</protein>
<sequence length="212" mass="24348">MQLFHLCLIISCTCPTVQASKLCLGWLWGMDIDPYKEFGATVELLSFLPSDFFPSVRDLLDTASALYREALESPEHCSPHHTALRQAILCWGELMTLATWVGVNLEDPASRDLVVSYVNTNMGLKFRQLLWFHISCLTFGRETVIEYLVAFGVWIRTPPAYRPPNAPILSTLPETTVVRRRGRSPRRRTPSPRRRRSQSPRRRRSQSRESQC</sequence>
<accession>Q67876</accession>
<organism>
    <name type="scientific">Hepatitis B virus genotype D subtype ayw (isolate Italy/CI/1992)</name>
    <name type="common">HBV-D</name>
    <dbReference type="NCBI Taxonomy" id="489489"/>
    <lineage>
        <taxon>Viruses</taxon>
        <taxon>Riboviria</taxon>
        <taxon>Pararnavirae</taxon>
        <taxon>Artverviricota</taxon>
        <taxon>Revtraviricetes</taxon>
        <taxon>Blubervirales</taxon>
        <taxon>Hepadnaviridae</taxon>
        <taxon>Orthohepadnavirus</taxon>
        <taxon>Hepatitis B virus</taxon>
        <taxon>hepatitis B virus genotype D</taxon>
    </lineage>
</organism>
<reference key="1">
    <citation type="submission" date="1992-03" db="EMBL/GenBank/DDBJ databases">
        <title>Sequence analysis of HBV genomes isolated from patients with HBsAg negative chronic liver disease.</title>
        <authorList>
            <person name="Lai M.E."/>
            <person name="Mazzoleni A.P."/>
            <person name="Balestrieri A."/>
            <person name="Melis A."/>
            <person name="Porru A."/>
        </authorList>
    </citation>
    <scope>NUCLEOTIDE SEQUENCE [GENOMIC DNA]</scope>
</reference>
<feature type="signal peptide" evidence="2">
    <location>
        <begin position="1"/>
        <end position="19"/>
    </location>
</feature>
<feature type="chain" id="PRO_0000324729" description="External core antigen" evidence="2">
    <location>
        <begin position="20"/>
        <end position="212"/>
    </location>
</feature>
<feature type="propeptide" id="PRO_0000324730" evidence="1">
    <location>
        <begin position="184"/>
        <end position="212"/>
    </location>
</feature>
<feature type="repeat" description="1; half-length">
    <location>
        <begin position="184"/>
        <end position="190"/>
    </location>
</feature>
<feature type="repeat" description="2">
    <location>
        <begin position="191"/>
        <end position="198"/>
    </location>
</feature>
<feature type="repeat" description="3">
    <location>
        <begin position="199"/>
        <end position="206"/>
    </location>
</feature>
<feature type="region of interest" description="HBEAG" evidence="2">
    <location>
        <begin position="25"/>
        <end position="27"/>
    </location>
</feature>
<feature type="region of interest" description="Disordered" evidence="3">
    <location>
        <begin position="165"/>
        <end position="212"/>
    </location>
</feature>
<feature type="region of interest" description="3 X 8 AA repeats of S-P-R-R-R-R-S-Q">
    <location>
        <begin position="184"/>
        <end position="206"/>
    </location>
</feature>
<feature type="compositionally biased region" description="Basic residues" evidence="3">
    <location>
        <begin position="178"/>
        <end position="205"/>
    </location>
</feature>
<feature type="site" description="Cleavage; by host" evidence="2">
    <location>
        <begin position="183"/>
        <end position="184"/>
    </location>
</feature>
<feature type="disulfide bond" description="Interchain" evidence="2">
    <location>
        <position position="77"/>
    </location>
</feature>
<feature type="disulfide bond" description="Interchain" evidence="2">
    <location>
        <position position="90"/>
    </location>
</feature>
<proteinExistence type="inferred from homology"/>
<name>HBEAG_HBVD6</name>
<evidence type="ECO:0000250" key="1"/>
<evidence type="ECO:0000255" key="2">
    <source>
        <dbReference type="HAMAP-Rule" id="MF_04076"/>
    </source>
</evidence>
<evidence type="ECO:0000256" key="3">
    <source>
        <dbReference type="SAM" id="MobiDB-lite"/>
    </source>
</evidence>
<comment type="function">
    <text evidence="2">May regulate immune response to the intracellular capsid in acting as a T-cell tolerogen, by having an immunoregulatory effect which prevents destruction of infected cells by cytotoxic T-cells. This immune regulation may predispose to chronicity during perinatal infections and prevent severe liver injury during adult infections.</text>
</comment>
<comment type="subunit">
    <text evidence="2">Homodimerizes.</text>
</comment>
<comment type="subcellular location">
    <subcellularLocation>
        <location evidence="2">Secreted</location>
    </subcellularLocation>
    <subcellularLocation>
        <location evidence="2">Host nucleus</location>
    </subcellularLocation>
</comment>
<comment type="alternative products">
    <event type="alternative initiation"/>
    <isoform>
        <id>Q67876-1</id>
        <name>External core antigen</name>
        <sequence type="displayed"/>
    </isoform>
    <isoform>
        <id>P0C6I2-1</id>
        <name>Capsid protein</name>
        <sequence type="external"/>
    </isoform>
</comment>
<comment type="PTM">
    <text evidence="2">Phosphorylated.</text>
</comment>
<comment type="PTM">
    <text evidence="2">Cleaved by host furin.</text>
</comment>
<comment type="similarity">
    <text evidence="2">Belongs to the orthohepadnavirus precore antigen family.</text>
</comment>
<gene>
    <name evidence="2" type="primary">C</name>
</gene>
<organismHost>
    <name type="scientific">Homo sapiens</name>
    <name type="common">Human</name>
    <dbReference type="NCBI Taxonomy" id="9606"/>
</organismHost>
<organismHost>
    <name type="scientific">Pan troglodytes</name>
    <name type="common">Chimpanzee</name>
    <dbReference type="NCBI Taxonomy" id="9598"/>
</organismHost>